<name>HUTI_BACAN</name>
<feature type="chain" id="PRO_0000306428" description="Imidazolonepropionase">
    <location>
        <begin position="1"/>
        <end position="423"/>
    </location>
</feature>
<feature type="binding site" evidence="1">
    <location>
        <position position="78"/>
    </location>
    <ligand>
        <name>Fe(3+)</name>
        <dbReference type="ChEBI" id="CHEBI:29034"/>
    </ligand>
</feature>
<feature type="binding site" evidence="1">
    <location>
        <position position="78"/>
    </location>
    <ligand>
        <name>Zn(2+)</name>
        <dbReference type="ChEBI" id="CHEBI:29105"/>
    </ligand>
</feature>
<feature type="binding site" evidence="1">
    <location>
        <position position="80"/>
    </location>
    <ligand>
        <name>Fe(3+)</name>
        <dbReference type="ChEBI" id="CHEBI:29034"/>
    </ligand>
</feature>
<feature type="binding site" evidence="1">
    <location>
        <position position="80"/>
    </location>
    <ligand>
        <name>Zn(2+)</name>
        <dbReference type="ChEBI" id="CHEBI:29105"/>
    </ligand>
</feature>
<feature type="binding site" evidence="1">
    <location>
        <position position="87"/>
    </location>
    <ligand>
        <name>4-imidazolone-5-propanoate</name>
        <dbReference type="ChEBI" id="CHEBI:77893"/>
    </ligand>
</feature>
<feature type="binding site" evidence="1">
    <location>
        <position position="150"/>
    </location>
    <ligand>
        <name>4-imidazolone-5-propanoate</name>
        <dbReference type="ChEBI" id="CHEBI:77893"/>
    </ligand>
</feature>
<feature type="binding site" evidence="1">
    <location>
        <position position="150"/>
    </location>
    <ligand>
        <name>N-formimidoyl-L-glutamate</name>
        <dbReference type="ChEBI" id="CHEBI:58928"/>
    </ligand>
</feature>
<feature type="binding site" evidence="1">
    <location>
        <position position="183"/>
    </location>
    <ligand>
        <name>4-imidazolone-5-propanoate</name>
        <dbReference type="ChEBI" id="CHEBI:77893"/>
    </ligand>
</feature>
<feature type="binding site" evidence="1">
    <location>
        <position position="247"/>
    </location>
    <ligand>
        <name>Fe(3+)</name>
        <dbReference type="ChEBI" id="CHEBI:29034"/>
    </ligand>
</feature>
<feature type="binding site" evidence="1">
    <location>
        <position position="247"/>
    </location>
    <ligand>
        <name>Zn(2+)</name>
        <dbReference type="ChEBI" id="CHEBI:29105"/>
    </ligand>
</feature>
<feature type="binding site" evidence="1">
    <location>
        <position position="250"/>
    </location>
    <ligand>
        <name>4-imidazolone-5-propanoate</name>
        <dbReference type="ChEBI" id="CHEBI:77893"/>
    </ligand>
</feature>
<feature type="binding site" evidence="1">
    <location>
        <position position="322"/>
    </location>
    <ligand>
        <name>Fe(3+)</name>
        <dbReference type="ChEBI" id="CHEBI:29034"/>
    </ligand>
</feature>
<feature type="binding site" evidence="1">
    <location>
        <position position="322"/>
    </location>
    <ligand>
        <name>Zn(2+)</name>
        <dbReference type="ChEBI" id="CHEBI:29105"/>
    </ligand>
</feature>
<feature type="binding site" evidence="1">
    <location>
        <position position="324"/>
    </location>
    <ligand>
        <name>N-formimidoyl-L-glutamate</name>
        <dbReference type="ChEBI" id="CHEBI:58928"/>
    </ligand>
</feature>
<feature type="binding site" evidence="1">
    <location>
        <position position="326"/>
    </location>
    <ligand>
        <name>N-formimidoyl-L-glutamate</name>
        <dbReference type="ChEBI" id="CHEBI:58928"/>
    </ligand>
</feature>
<feature type="binding site" evidence="1">
    <location>
        <position position="327"/>
    </location>
    <ligand>
        <name>4-imidazolone-5-propanoate</name>
        <dbReference type="ChEBI" id="CHEBI:77893"/>
    </ligand>
</feature>
<proteinExistence type="inferred from homology"/>
<comment type="function">
    <text evidence="1">Catalyzes the hydrolytic cleavage of the carbon-nitrogen bond in imidazolone-5-propanoate to yield N-formimidoyl-L-glutamate. It is the third step in the universal histidine degradation pathway.</text>
</comment>
<comment type="catalytic activity">
    <reaction evidence="1">
        <text>4-imidazolone-5-propanoate + H2O = N-formimidoyl-L-glutamate</text>
        <dbReference type="Rhea" id="RHEA:23660"/>
        <dbReference type="ChEBI" id="CHEBI:15377"/>
        <dbReference type="ChEBI" id="CHEBI:58928"/>
        <dbReference type="ChEBI" id="CHEBI:77893"/>
        <dbReference type="EC" id="3.5.2.7"/>
    </reaction>
</comment>
<comment type="cofactor">
    <cofactor evidence="1">
        <name>Zn(2+)</name>
        <dbReference type="ChEBI" id="CHEBI:29105"/>
    </cofactor>
    <cofactor evidence="1">
        <name>Fe(3+)</name>
        <dbReference type="ChEBI" id="CHEBI:29034"/>
    </cofactor>
    <text evidence="1">Binds 1 zinc or iron ion per subunit.</text>
</comment>
<comment type="pathway">
    <text evidence="1">Amino-acid degradation; L-histidine degradation into L-glutamate; N-formimidoyl-L-glutamate from L-histidine: step 3/3.</text>
</comment>
<comment type="subcellular location">
    <subcellularLocation>
        <location evidence="1">Cytoplasm</location>
    </subcellularLocation>
</comment>
<comment type="similarity">
    <text evidence="1">Belongs to the metallo-dependent hydrolases superfamily. HutI family.</text>
</comment>
<reference key="1">
    <citation type="journal article" date="2003" name="Nature">
        <title>The genome sequence of Bacillus anthracis Ames and comparison to closely related bacteria.</title>
        <authorList>
            <person name="Read T.D."/>
            <person name="Peterson S.N."/>
            <person name="Tourasse N.J."/>
            <person name="Baillie L.W."/>
            <person name="Paulsen I.T."/>
            <person name="Nelson K.E."/>
            <person name="Tettelin H."/>
            <person name="Fouts D.E."/>
            <person name="Eisen J.A."/>
            <person name="Gill S.R."/>
            <person name="Holtzapple E.K."/>
            <person name="Okstad O.A."/>
            <person name="Helgason E."/>
            <person name="Rilstone J."/>
            <person name="Wu M."/>
            <person name="Kolonay J.F."/>
            <person name="Beanan M.J."/>
            <person name="Dodson R.J."/>
            <person name="Brinkac L.M."/>
            <person name="Gwinn M.L."/>
            <person name="DeBoy R.T."/>
            <person name="Madpu R."/>
            <person name="Daugherty S.C."/>
            <person name="Durkin A.S."/>
            <person name="Haft D.H."/>
            <person name="Nelson W.C."/>
            <person name="Peterson J.D."/>
            <person name="Pop M."/>
            <person name="Khouri H.M."/>
            <person name="Radune D."/>
            <person name="Benton J.L."/>
            <person name="Mahamoud Y."/>
            <person name="Jiang L."/>
            <person name="Hance I.R."/>
            <person name="Weidman J.F."/>
            <person name="Berry K.J."/>
            <person name="Plaut R.D."/>
            <person name="Wolf A.M."/>
            <person name="Watkins K.L."/>
            <person name="Nierman W.C."/>
            <person name="Hazen A."/>
            <person name="Cline R.T."/>
            <person name="Redmond C."/>
            <person name="Thwaite J.E."/>
            <person name="White O."/>
            <person name="Salzberg S.L."/>
            <person name="Thomason B."/>
            <person name="Friedlander A.M."/>
            <person name="Koehler T.M."/>
            <person name="Hanna P.C."/>
            <person name="Kolstoe A.-B."/>
            <person name="Fraser C.M."/>
        </authorList>
    </citation>
    <scope>NUCLEOTIDE SEQUENCE [LARGE SCALE GENOMIC DNA]</scope>
    <source>
        <strain>Ames / isolate Porton</strain>
    </source>
</reference>
<reference key="2">
    <citation type="submission" date="2004-01" db="EMBL/GenBank/DDBJ databases">
        <title>Complete genome sequence of Bacillus anthracis Sterne.</title>
        <authorList>
            <person name="Brettin T.S."/>
            <person name="Bruce D."/>
            <person name="Challacombe J.F."/>
            <person name="Gilna P."/>
            <person name="Han C."/>
            <person name="Hill K."/>
            <person name="Hitchcock P."/>
            <person name="Jackson P."/>
            <person name="Keim P."/>
            <person name="Longmire J."/>
            <person name="Lucas S."/>
            <person name="Okinaka R."/>
            <person name="Richardson P."/>
            <person name="Rubin E."/>
            <person name="Tice H."/>
        </authorList>
    </citation>
    <scope>NUCLEOTIDE SEQUENCE [LARGE SCALE GENOMIC DNA]</scope>
    <source>
        <strain>Sterne</strain>
    </source>
</reference>
<reference key="3">
    <citation type="journal article" date="2009" name="J. Bacteriol.">
        <title>The complete genome sequence of Bacillus anthracis Ames 'Ancestor'.</title>
        <authorList>
            <person name="Ravel J."/>
            <person name="Jiang L."/>
            <person name="Stanley S.T."/>
            <person name="Wilson M.R."/>
            <person name="Decker R.S."/>
            <person name="Read T.D."/>
            <person name="Worsham P."/>
            <person name="Keim P.S."/>
            <person name="Salzberg S.L."/>
            <person name="Fraser-Liggett C.M."/>
            <person name="Rasko D.A."/>
        </authorList>
    </citation>
    <scope>NUCLEOTIDE SEQUENCE [LARGE SCALE GENOMIC DNA]</scope>
    <source>
        <strain>Ames ancestor</strain>
    </source>
</reference>
<sequence>MLDTLLINIGQLLTMDQEDGLLRREAMNTLPVIENGAVGIENGVITFVGTAEEAKGLQAKEVIDCGGKMVSPGLVDPHTHLVFGGSRENEIALKLQGVPYLEILEQGGGILSTVNATKQASKEELVQKAKFHLDRMLSFGVTTVEAKSGYGLDDETEWKQLEATAQLQKEHPIDLVSTFLGAHAVPKEYKGRSKEFLQWMLDLLPEMKEKQLAEFVDIFCETGVFSVEESKEFLLKAKELGFDVKIHADEIDPLGGAEAAAEIGAASADHLVGASDKGIEMLANSNTVATLLPGTTFYLNKESFARGRKMIDEGVAVALATDFNPGSCPTENIQLIMSIAMLKLKMTPEEVWNAVTVNSSYAINRGDVAGKIRVGRKADLVLWDAYNYAYVPYHYGVSHVNTVWKNGNIAYTRGEQSWSTATI</sequence>
<organism>
    <name type="scientific">Bacillus anthracis</name>
    <dbReference type="NCBI Taxonomy" id="1392"/>
    <lineage>
        <taxon>Bacteria</taxon>
        <taxon>Bacillati</taxon>
        <taxon>Bacillota</taxon>
        <taxon>Bacilli</taxon>
        <taxon>Bacillales</taxon>
        <taxon>Bacillaceae</taxon>
        <taxon>Bacillus</taxon>
        <taxon>Bacillus cereus group</taxon>
    </lineage>
</organism>
<accession>Q81Y47</accession>
<accession>Q6HVE2</accession>
<accession>Q6KPL1</accession>
<dbReference type="EC" id="3.5.2.7" evidence="1"/>
<dbReference type="EMBL" id="AE016879">
    <property type="protein sequence ID" value="AAP27459.1"/>
    <property type="molecule type" value="Genomic_DNA"/>
</dbReference>
<dbReference type="EMBL" id="AE017334">
    <property type="protein sequence ID" value="AAT32818.1"/>
    <property type="molecule type" value="Genomic_DNA"/>
</dbReference>
<dbReference type="EMBL" id="AE017225">
    <property type="protein sequence ID" value="AAT55747.1"/>
    <property type="molecule type" value="Genomic_DNA"/>
</dbReference>
<dbReference type="RefSeq" id="NP_845973.1">
    <property type="nucleotide sequence ID" value="NC_003997.3"/>
</dbReference>
<dbReference type="RefSeq" id="WP_000887529.1">
    <property type="nucleotide sequence ID" value="NZ_WXXJ01000029.1"/>
</dbReference>
<dbReference type="RefSeq" id="YP_029696.1">
    <property type="nucleotide sequence ID" value="NC_005945.1"/>
</dbReference>
<dbReference type="SMR" id="Q81Y47"/>
<dbReference type="STRING" id="261594.GBAA_3710"/>
<dbReference type="DNASU" id="1086228"/>
<dbReference type="GeneID" id="75086716"/>
<dbReference type="KEGG" id="ban:BA_3710"/>
<dbReference type="KEGG" id="bar:GBAA_3710"/>
<dbReference type="KEGG" id="bat:BAS3440"/>
<dbReference type="PATRIC" id="fig|198094.11.peg.3681"/>
<dbReference type="eggNOG" id="COG1228">
    <property type="taxonomic scope" value="Bacteria"/>
</dbReference>
<dbReference type="HOGENOM" id="CLU_041647_0_1_9"/>
<dbReference type="OMA" id="CAPHARW"/>
<dbReference type="OrthoDB" id="9776455at2"/>
<dbReference type="UniPathway" id="UPA00379">
    <property type="reaction ID" value="UER00551"/>
</dbReference>
<dbReference type="Proteomes" id="UP000000427">
    <property type="component" value="Chromosome"/>
</dbReference>
<dbReference type="Proteomes" id="UP000000594">
    <property type="component" value="Chromosome"/>
</dbReference>
<dbReference type="GO" id="GO:0005737">
    <property type="term" value="C:cytoplasm"/>
    <property type="evidence" value="ECO:0007669"/>
    <property type="project" value="UniProtKB-SubCell"/>
</dbReference>
<dbReference type="GO" id="GO:0050480">
    <property type="term" value="F:imidazolonepropionase activity"/>
    <property type="evidence" value="ECO:0007669"/>
    <property type="project" value="UniProtKB-UniRule"/>
</dbReference>
<dbReference type="GO" id="GO:0005506">
    <property type="term" value="F:iron ion binding"/>
    <property type="evidence" value="ECO:0007669"/>
    <property type="project" value="UniProtKB-UniRule"/>
</dbReference>
<dbReference type="GO" id="GO:0008270">
    <property type="term" value="F:zinc ion binding"/>
    <property type="evidence" value="ECO:0007669"/>
    <property type="project" value="UniProtKB-UniRule"/>
</dbReference>
<dbReference type="GO" id="GO:0019556">
    <property type="term" value="P:L-histidine catabolic process to glutamate and formamide"/>
    <property type="evidence" value="ECO:0007669"/>
    <property type="project" value="UniProtKB-UniPathway"/>
</dbReference>
<dbReference type="GO" id="GO:0019557">
    <property type="term" value="P:L-histidine catabolic process to glutamate and formate"/>
    <property type="evidence" value="ECO:0007669"/>
    <property type="project" value="UniProtKB-UniPathway"/>
</dbReference>
<dbReference type="CDD" id="cd01296">
    <property type="entry name" value="Imidazolone-5PH"/>
    <property type="match status" value="1"/>
</dbReference>
<dbReference type="FunFam" id="3.20.20.140:FF:000007">
    <property type="entry name" value="Imidazolonepropionase"/>
    <property type="match status" value="1"/>
</dbReference>
<dbReference type="Gene3D" id="3.20.20.140">
    <property type="entry name" value="Metal-dependent hydrolases"/>
    <property type="match status" value="1"/>
</dbReference>
<dbReference type="Gene3D" id="2.30.40.10">
    <property type="entry name" value="Urease, subunit C, domain 1"/>
    <property type="match status" value="1"/>
</dbReference>
<dbReference type="HAMAP" id="MF_00372">
    <property type="entry name" value="HutI"/>
    <property type="match status" value="1"/>
</dbReference>
<dbReference type="InterPro" id="IPR006680">
    <property type="entry name" value="Amidohydro-rel"/>
</dbReference>
<dbReference type="InterPro" id="IPR005920">
    <property type="entry name" value="HutI"/>
</dbReference>
<dbReference type="InterPro" id="IPR011059">
    <property type="entry name" value="Metal-dep_hydrolase_composite"/>
</dbReference>
<dbReference type="InterPro" id="IPR032466">
    <property type="entry name" value="Metal_Hydrolase"/>
</dbReference>
<dbReference type="NCBIfam" id="TIGR01224">
    <property type="entry name" value="hutI"/>
    <property type="match status" value="1"/>
</dbReference>
<dbReference type="PANTHER" id="PTHR42752">
    <property type="entry name" value="IMIDAZOLONEPROPIONASE"/>
    <property type="match status" value="1"/>
</dbReference>
<dbReference type="PANTHER" id="PTHR42752:SF1">
    <property type="entry name" value="IMIDAZOLONEPROPIONASE-RELATED"/>
    <property type="match status" value="1"/>
</dbReference>
<dbReference type="Pfam" id="PF01979">
    <property type="entry name" value="Amidohydro_1"/>
    <property type="match status" value="1"/>
</dbReference>
<dbReference type="SUPFAM" id="SSF51338">
    <property type="entry name" value="Composite domain of metallo-dependent hydrolases"/>
    <property type="match status" value="1"/>
</dbReference>
<dbReference type="SUPFAM" id="SSF51556">
    <property type="entry name" value="Metallo-dependent hydrolases"/>
    <property type="match status" value="1"/>
</dbReference>
<keyword id="KW-0963">Cytoplasm</keyword>
<keyword id="KW-0369">Histidine metabolism</keyword>
<keyword id="KW-0378">Hydrolase</keyword>
<keyword id="KW-0408">Iron</keyword>
<keyword id="KW-0479">Metal-binding</keyword>
<keyword id="KW-1185">Reference proteome</keyword>
<keyword id="KW-0862">Zinc</keyword>
<evidence type="ECO:0000255" key="1">
    <source>
        <dbReference type="HAMAP-Rule" id="MF_00372"/>
    </source>
</evidence>
<protein>
    <recommendedName>
        <fullName evidence="1">Imidazolonepropionase</fullName>
        <ecNumber evidence="1">3.5.2.7</ecNumber>
    </recommendedName>
    <alternativeName>
        <fullName evidence="1">Imidazolone-5-propionate hydrolase</fullName>
    </alternativeName>
</protein>
<gene>
    <name evidence="1" type="primary">hutI</name>
    <name type="ordered locus">BA_3710</name>
    <name type="ordered locus">GBAA_3710</name>
    <name type="ordered locus">BAS3440</name>
</gene>